<feature type="chain" id="PRO_0000305773" description="Small ribosomal subunit protein uS8">
    <location>
        <begin position="1"/>
        <end position="129"/>
    </location>
</feature>
<reference key="1">
    <citation type="journal article" date="2008" name="J. Bacteriol.">
        <title>Genome sequence of Thermofilum pendens reveals an exceptional loss of biosynthetic pathways without genome reduction.</title>
        <authorList>
            <person name="Anderson I."/>
            <person name="Rodriguez J."/>
            <person name="Susanti D."/>
            <person name="Porat I."/>
            <person name="Reich C."/>
            <person name="Ulrich L.E."/>
            <person name="Elkins J.G."/>
            <person name="Mavromatis K."/>
            <person name="Lykidis A."/>
            <person name="Kim E."/>
            <person name="Thompson L.S."/>
            <person name="Nolan M."/>
            <person name="Land M."/>
            <person name="Copeland A."/>
            <person name="Lapidus A."/>
            <person name="Lucas S."/>
            <person name="Detter C."/>
            <person name="Zhulin I.B."/>
            <person name="Olsen G.J."/>
            <person name="Whitman W."/>
            <person name="Mukhopadhyay B."/>
            <person name="Bristow J."/>
            <person name="Kyrpides N."/>
        </authorList>
    </citation>
    <scope>NUCLEOTIDE SEQUENCE [LARGE SCALE GENOMIC DNA]</scope>
    <source>
        <strain>DSM 2475 / Hrk 5</strain>
    </source>
</reference>
<sequence>MMLDTLANALSTIMNNEVRGKKQCVIYPSSKLIVAVLDTLKRSGYIGDFELIDDGRGGKIVVNLLGRINKIGVIKPRYPVKKNEFEAWEREYLPSRDVGLLIVSTPKGVMTHREAKEKGLGGVLLAYVY</sequence>
<gene>
    <name evidence="1" type="primary">rps8</name>
    <name type="ordered locus">Tpen_0240</name>
</gene>
<keyword id="KW-1185">Reference proteome</keyword>
<keyword id="KW-0687">Ribonucleoprotein</keyword>
<keyword id="KW-0689">Ribosomal protein</keyword>
<keyword id="KW-0694">RNA-binding</keyword>
<keyword id="KW-0699">rRNA-binding</keyword>
<comment type="function">
    <text evidence="1">One of the primary rRNA binding proteins, it binds directly to 16S rRNA central domain where it helps coordinate assembly of the platform of the 30S subunit.</text>
</comment>
<comment type="subunit">
    <text evidence="1">Part of the 30S ribosomal subunit.</text>
</comment>
<comment type="similarity">
    <text evidence="1">Belongs to the universal ribosomal protein uS8 family.</text>
</comment>
<accession>A1RWS0</accession>
<protein>
    <recommendedName>
        <fullName evidence="1">Small ribosomal subunit protein uS8</fullName>
    </recommendedName>
    <alternativeName>
        <fullName evidence="2">30S ribosomal protein S8</fullName>
    </alternativeName>
</protein>
<organism>
    <name type="scientific">Thermofilum pendens (strain DSM 2475 / Hrk 5)</name>
    <dbReference type="NCBI Taxonomy" id="368408"/>
    <lineage>
        <taxon>Archaea</taxon>
        <taxon>Thermoproteota</taxon>
        <taxon>Thermoprotei</taxon>
        <taxon>Thermofilales</taxon>
        <taxon>Thermofilaceae</taxon>
        <taxon>Thermofilum</taxon>
    </lineage>
</organism>
<evidence type="ECO:0000255" key="1">
    <source>
        <dbReference type="HAMAP-Rule" id="MF_01302"/>
    </source>
</evidence>
<evidence type="ECO:0000305" key="2"/>
<proteinExistence type="inferred from homology"/>
<name>RS8_THEPD</name>
<dbReference type="EMBL" id="CP000505">
    <property type="protein sequence ID" value="ABL77650.1"/>
    <property type="molecule type" value="Genomic_DNA"/>
</dbReference>
<dbReference type="SMR" id="A1RWS0"/>
<dbReference type="STRING" id="368408.Tpen_0240"/>
<dbReference type="EnsemblBacteria" id="ABL77650">
    <property type="protein sequence ID" value="ABL77650"/>
    <property type="gene ID" value="Tpen_0240"/>
</dbReference>
<dbReference type="KEGG" id="tpe:Tpen_0240"/>
<dbReference type="eggNOG" id="arCOG04091">
    <property type="taxonomic scope" value="Archaea"/>
</dbReference>
<dbReference type="HOGENOM" id="CLU_098428_1_1_2"/>
<dbReference type="Proteomes" id="UP000000641">
    <property type="component" value="Chromosome"/>
</dbReference>
<dbReference type="GO" id="GO:1990904">
    <property type="term" value="C:ribonucleoprotein complex"/>
    <property type="evidence" value="ECO:0007669"/>
    <property type="project" value="UniProtKB-KW"/>
</dbReference>
<dbReference type="GO" id="GO:0005840">
    <property type="term" value="C:ribosome"/>
    <property type="evidence" value="ECO:0007669"/>
    <property type="project" value="UniProtKB-KW"/>
</dbReference>
<dbReference type="GO" id="GO:0019843">
    <property type="term" value="F:rRNA binding"/>
    <property type="evidence" value="ECO:0007669"/>
    <property type="project" value="UniProtKB-UniRule"/>
</dbReference>
<dbReference type="GO" id="GO:0003735">
    <property type="term" value="F:structural constituent of ribosome"/>
    <property type="evidence" value="ECO:0007669"/>
    <property type="project" value="InterPro"/>
</dbReference>
<dbReference type="GO" id="GO:0006412">
    <property type="term" value="P:translation"/>
    <property type="evidence" value="ECO:0007669"/>
    <property type="project" value="UniProtKB-UniRule"/>
</dbReference>
<dbReference type="FunFam" id="3.30.1370.30:FF:000001">
    <property type="entry name" value="40S ribosomal protein S15a"/>
    <property type="match status" value="1"/>
</dbReference>
<dbReference type="Gene3D" id="3.30.1370.30">
    <property type="match status" value="1"/>
</dbReference>
<dbReference type="Gene3D" id="3.30.1490.10">
    <property type="match status" value="1"/>
</dbReference>
<dbReference type="HAMAP" id="MF_01302_A">
    <property type="entry name" value="Ribosomal_uS8_A"/>
    <property type="match status" value="1"/>
</dbReference>
<dbReference type="InterPro" id="IPR000630">
    <property type="entry name" value="Ribosomal_uS8"/>
</dbReference>
<dbReference type="InterPro" id="IPR047863">
    <property type="entry name" value="Ribosomal_uS8_CS"/>
</dbReference>
<dbReference type="InterPro" id="IPR035987">
    <property type="entry name" value="Ribosomal_uS8_sf"/>
</dbReference>
<dbReference type="NCBIfam" id="NF003115">
    <property type="entry name" value="PRK04034.1"/>
    <property type="match status" value="1"/>
</dbReference>
<dbReference type="PANTHER" id="PTHR11758">
    <property type="entry name" value="40S RIBOSOMAL PROTEIN S15A"/>
    <property type="match status" value="1"/>
</dbReference>
<dbReference type="Pfam" id="PF00410">
    <property type="entry name" value="Ribosomal_S8"/>
    <property type="match status" value="1"/>
</dbReference>
<dbReference type="SUPFAM" id="SSF56047">
    <property type="entry name" value="Ribosomal protein S8"/>
    <property type="match status" value="1"/>
</dbReference>
<dbReference type="PROSITE" id="PS00053">
    <property type="entry name" value="RIBOSOMAL_S8"/>
    <property type="match status" value="1"/>
</dbReference>